<protein>
    <recommendedName>
        <fullName evidence="1">Chaperone protein DnaK</fullName>
    </recommendedName>
    <alternativeName>
        <fullName evidence="1">HSP70</fullName>
    </alternativeName>
    <alternativeName>
        <fullName evidence="1">Heat shock 70 kDa protein</fullName>
    </alternativeName>
    <alternativeName>
        <fullName evidence="1">Heat shock protein 70</fullName>
    </alternativeName>
</protein>
<name>DNAK_THET2</name>
<comment type="function">
    <text evidence="1">Acts as a chaperone.</text>
</comment>
<comment type="induction">
    <text evidence="1">By stress conditions e.g. heat shock.</text>
</comment>
<comment type="similarity">
    <text evidence="1">Belongs to the heat shock protein 70 family.</text>
</comment>
<feature type="chain" id="PRO_0000226023" description="Chaperone protein DnaK">
    <location>
        <begin position="1"/>
        <end position="615"/>
    </location>
</feature>
<feature type="region of interest" description="Disordered" evidence="2">
    <location>
        <begin position="592"/>
        <end position="615"/>
    </location>
</feature>
<feature type="modified residue" description="Phosphothreonine; by autocatalysis" evidence="1">
    <location>
        <position position="195"/>
    </location>
</feature>
<accession>Q72IK5</accession>
<proteinExistence type="inferred from homology"/>
<organism>
    <name type="scientific">Thermus thermophilus (strain ATCC BAA-163 / DSM 7039 / HB27)</name>
    <dbReference type="NCBI Taxonomy" id="262724"/>
    <lineage>
        <taxon>Bacteria</taxon>
        <taxon>Thermotogati</taxon>
        <taxon>Deinococcota</taxon>
        <taxon>Deinococci</taxon>
        <taxon>Thermales</taxon>
        <taxon>Thermaceae</taxon>
        <taxon>Thermus</taxon>
    </lineage>
</organism>
<reference key="1">
    <citation type="journal article" date="2004" name="Nat. Biotechnol.">
        <title>The genome sequence of the extreme thermophile Thermus thermophilus.</title>
        <authorList>
            <person name="Henne A."/>
            <person name="Brueggemann H."/>
            <person name="Raasch C."/>
            <person name="Wiezer A."/>
            <person name="Hartsch T."/>
            <person name="Liesegang H."/>
            <person name="Johann A."/>
            <person name="Lienard T."/>
            <person name="Gohl O."/>
            <person name="Martinez-Arias R."/>
            <person name="Jacobi C."/>
            <person name="Starkuviene V."/>
            <person name="Schlenczeck S."/>
            <person name="Dencker S."/>
            <person name="Huber R."/>
            <person name="Klenk H.-P."/>
            <person name="Kramer W."/>
            <person name="Merkl R."/>
            <person name="Gottschalk G."/>
            <person name="Fritz H.-J."/>
        </authorList>
    </citation>
    <scope>NUCLEOTIDE SEQUENCE [LARGE SCALE GENOMIC DNA]</scope>
    <source>
        <strain>ATCC BAA-163 / DSM 7039 / HB27</strain>
    </source>
</reference>
<gene>
    <name evidence="1" type="primary">dnaK</name>
    <name type="ordered locus">TT_C1127</name>
</gene>
<keyword id="KW-0067">ATP-binding</keyword>
<keyword id="KW-0143">Chaperone</keyword>
<keyword id="KW-0547">Nucleotide-binding</keyword>
<keyword id="KW-0597">Phosphoprotein</keyword>
<keyword id="KW-0346">Stress response</keyword>
<evidence type="ECO:0000255" key="1">
    <source>
        <dbReference type="HAMAP-Rule" id="MF_00332"/>
    </source>
</evidence>
<evidence type="ECO:0000256" key="2">
    <source>
        <dbReference type="SAM" id="MobiDB-lite"/>
    </source>
</evidence>
<dbReference type="EMBL" id="AE017221">
    <property type="protein sequence ID" value="AAS81469.1"/>
    <property type="molecule type" value="Genomic_DNA"/>
</dbReference>
<dbReference type="RefSeq" id="WP_011173541.1">
    <property type="nucleotide sequence ID" value="NC_005835.1"/>
</dbReference>
<dbReference type="BMRB" id="Q72IK5"/>
<dbReference type="SMR" id="Q72IK5"/>
<dbReference type="KEGG" id="tth:TT_C1127"/>
<dbReference type="eggNOG" id="COG0443">
    <property type="taxonomic scope" value="Bacteria"/>
</dbReference>
<dbReference type="HOGENOM" id="CLU_005965_2_4_0"/>
<dbReference type="OrthoDB" id="9766019at2"/>
<dbReference type="Proteomes" id="UP000000592">
    <property type="component" value="Chromosome"/>
</dbReference>
<dbReference type="GO" id="GO:0005524">
    <property type="term" value="F:ATP binding"/>
    <property type="evidence" value="ECO:0007669"/>
    <property type="project" value="UniProtKB-UniRule"/>
</dbReference>
<dbReference type="GO" id="GO:0140662">
    <property type="term" value="F:ATP-dependent protein folding chaperone"/>
    <property type="evidence" value="ECO:0007669"/>
    <property type="project" value="InterPro"/>
</dbReference>
<dbReference type="GO" id="GO:0051082">
    <property type="term" value="F:unfolded protein binding"/>
    <property type="evidence" value="ECO:0007669"/>
    <property type="project" value="InterPro"/>
</dbReference>
<dbReference type="CDD" id="cd10234">
    <property type="entry name" value="ASKHA_NBD_HSP70_DnaK-like"/>
    <property type="match status" value="1"/>
</dbReference>
<dbReference type="FunFam" id="2.60.34.10:FF:000014">
    <property type="entry name" value="Chaperone protein DnaK HSP70"/>
    <property type="match status" value="1"/>
</dbReference>
<dbReference type="FunFam" id="3.30.30.30:FF:000005">
    <property type="entry name" value="Heat shock protein ssb1"/>
    <property type="match status" value="1"/>
</dbReference>
<dbReference type="FunFam" id="3.30.420.40:FF:000004">
    <property type="entry name" value="Molecular chaperone DnaK"/>
    <property type="match status" value="1"/>
</dbReference>
<dbReference type="FunFam" id="3.90.640.10:FF:000003">
    <property type="entry name" value="Molecular chaperone DnaK"/>
    <property type="match status" value="1"/>
</dbReference>
<dbReference type="Gene3D" id="3.30.420.40">
    <property type="match status" value="2"/>
</dbReference>
<dbReference type="Gene3D" id="3.90.640.10">
    <property type="entry name" value="Actin, Chain A, domain 4"/>
    <property type="match status" value="1"/>
</dbReference>
<dbReference type="Gene3D" id="2.60.34.10">
    <property type="entry name" value="Substrate Binding Domain Of DNAk, Chain A, domain 1"/>
    <property type="match status" value="1"/>
</dbReference>
<dbReference type="HAMAP" id="MF_00332">
    <property type="entry name" value="DnaK"/>
    <property type="match status" value="1"/>
</dbReference>
<dbReference type="InterPro" id="IPR043129">
    <property type="entry name" value="ATPase_NBD"/>
</dbReference>
<dbReference type="InterPro" id="IPR012725">
    <property type="entry name" value="Chaperone_DnaK"/>
</dbReference>
<dbReference type="InterPro" id="IPR018181">
    <property type="entry name" value="Heat_shock_70_CS"/>
</dbReference>
<dbReference type="InterPro" id="IPR029047">
    <property type="entry name" value="HSP70_peptide-bd_sf"/>
</dbReference>
<dbReference type="InterPro" id="IPR013126">
    <property type="entry name" value="Hsp_70_fam"/>
</dbReference>
<dbReference type="NCBIfam" id="NF001413">
    <property type="entry name" value="PRK00290.1"/>
    <property type="match status" value="1"/>
</dbReference>
<dbReference type="NCBIfam" id="NF003520">
    <property type="entry name" value="PRK05183.1"/>
    <property type="match status" value="1"/>
</dbReference>
<dbReference type="NCBIfam" id="TIGR02350">
    <property type="entry name" value="prok_dnaK"/>
    <property type="match status" value="1"/>
</dbReference>
<dbReference type="PANTHER" id="PTHR19375">
    <property type="entry name" value="HEAT SHOCK PROTEIN 70KDA"/>
    <property type="match status" value="1"/>
</dbReference>
<dbReference type="Pfam" id="PF00012">
    <property type="entry name" value="HSP70"/>
    <property type="match status" value="1"/>
</dbReference>
<dbReference type="PRINTS" id="PR00301">
    <property type="entry name" value="HEATSHOCK70"/>
</dbReference>
<dbReference type="SUPFAM" id="SSF53067">
    <property type="entry name" value="Actin-like ATPase domain"/>
    <property type="match status" value="2"/>
</dbReference>
<dbReference type="SUPFAM" id="SSF100920">
    <property type="entry name" value="Heat shock protein 70kD (HSP70), peptide-binding domain"/>
    <property type="match status" value="1"/>
</dbReference>
<dbReference type="PROSITE" id="PS00297">
    <property type="entry name" value="HSP70_1"/>
    <property type="match status" value="1"/>
</dbReference>
<dbReference type="PROSITE" id="PS00329">
    <property type="entry name" value="HSP70_2"/>
    <property type="match status" value="1"/>
</dbReference>
<dbReference type="PROSITE" id="PS01036">
    <property type="entry name" value="HSP70_3"/>
    <property type="match status" value="1"/>
</dbReference>
<sequence>MAKAVGIDLGTTNSVIAVLEGGKPVVLENAEGERVTPSVVAFRDGETLVGRMAKRQAVLNPEGTIFEIKRFIGRRFEEVQEEAKRVPYKVVPGPDGGVRVEVKGKLYTPEEISAMILRKLVEDASKKLGEKITKAVITVPAYFNNAQREATANAGRIAGLEVLRIINEPTAAALAYGLDKKGNETVLVFDLGGGTFDVTVLEIGEGVFEVKATSGDTHLGGSDMDHAIVNWLAEEFKKEHGVDLKADRQALQRLIEAAEKAKIELSSTLETTISLPFIALDPASKTPLHLEKKLTRAKFEELIQPLLKRLRGPVEQALKDAGLTPAQIDEVILVGGATRVPAVQQVVRELLGKEPNRSVNPDEVVAMGAAIQAGVLMGEVRDVVLLDVTPLSLGVETKGGVMTVLIPRNTTIPTRKCEIFTTAEHNQTAVEIHVLQGERPMAQDNKSLGRFRLEGIPPMPAGVPQIEVCFDIDANGILHVTAKERSTGREASITIQNTTTLSEEEIQRIIEEAKRHAEEDRRRREHAELKNALDSARVQAERVLQERQGAPEARARLEAAIGKAKELVERDAPDPELKAATEELLKAVEEYEKGAQAASGKGPDDVIDADYKPAD</sequence>